<accession>Q79S39</accession>
<proteinExistence type="predicted"/>
<dbReference type="EMBL" id="AY055428">
    <property type="protein sequence ID" value="AAL59692.1"/>
    <property type="molecule type" value="Genomic_DNA"/>
</dbReference>
<dbReference type="RefSeq" id="WP_000854920.1">
    <property type="nucleotide sequence ID" value="NZ_WYCS01000030.1"/>
</dbReference>
<dbReference type="SMR" id="Q79S39"/>
<dbReference type="OMA" id="DENQATF"/>
<dbReference type="GO" id="GO:0003677">
    <property type="term" value="F:DNA binding"/>
    <property type="evidence" value="ECO:0007669"/>
    <property type="project" value="UniProtKB-KW"/>
</dbReference>
<dbReference type="CDD" id="cd00093">
    <property type="entry name" value="HTH_XRE"/>
    <property type="match status" value="1"/>
</dbReference>
<dbReference type="CDD" id="cd06529">
    <property type="entry name" value="S24_LexA-like"/>
    <property type="match status" value="1"/>
</dbReference>
<dbReference type="Gene3D" id="1.10.260.40">
    <property type="entry name" value="lambda repressor-like DNA-binding domains"/>
    <property type="match status" value="1"/>
</dbReference>
<dbReference type="Gene3D" id="2.10.109.10">
    <property type="entry name" value="Umud Fragment, subunit A"/>
    <property type="match status" value="1"/>
</dbReference>
<dbReference type="InterPro" id="IPR001387">
    <property type="entry name" value="Cro/C1-type_HTH"/>
</dbReference>
<dbReference type="InterPro" id="IPR010982">
    <property type="entry name" value="Lambda_DNA-bd_dom_sf"/>
</dbReference>
<dbReference type="InterPro" id="IPR039418">
    <property type="entry name" value="LexA-like"/>
</dbReference>
<dbReference type="InterPro" id="IPR036286">
    <property type="entry name" value="LexA/Signal_pep-like_sf"/>
</dbReference>
<dbReference type="InterPro" id="IPR050077">
    <property type="entry name" value="LexA_repressor"/>
</dbReference>
<dbReference type="InterPro" id="IPR015927">
    <property type="entry name" value="Peptidase_S24_S26A/B/C"/>
</dbReference>
<dbReference type="PANTHER" id="PTHR33516">
    <property type="entry name" value="LEXA REPRESSOR"/>
    <property type="match status" value="1"/>
</dbReference>
<dbReference type="PANTHER" id="PTHR33516:SF2">
    <property type="entry name" value="LEXA REPRESSOR-RELATED"/>
    <property type="match status" value="1"/>
</dbReference>
<dbReference type="Pfam" id="PF01381">
    <property type="entry name" value="HTH_3"/>
    <property type="match status" value="1"/>
</dbReference>
<dbReference type="Pfam" id="PF00717">
    <property type="entry name" value="Peptidase_S24"/>
    <property type="match status" value="1"/>
</dbReference>
<dbReference type="SMART" id="SM00530">
    <property type="entry name" value="HTH_XRE"/>
    <property type="match status" value="1"/>
</dbReference>
<dbReference type="SUPFAM" id="SSF47413">
    <property type="entry name" value="lambda repressor-like DNA-binding domains"/>
    <property type="match status" value="1"/>
</dbReference>
<dbReference type="SUPFAM" id="SSF51306">
    <property type="entry name" value="LexA/Signal peptidase"/>
    <property type="match status" value="1"/>
</dbReference>
<dbReference type="PROSITE" id="PS50943">
    <property type="entry name" value="HTH_CROC1"/>
    <property type="match status" value="1"/>
</dbReference>
<keyword id="KW-0238">DNA-binding</keyword>
<keyword id="KW-0678">Repressor</keyword>
<keyword id="KW-0804">Transcription</keyword>
<keyword id="KW-0805">Transcription regulation</keyword>
<comment type="function">
    <text>May control the expression of the integrase and inhibit excision of the mobile element SXT, and regulate the expression of other genes as well.</text>
</comment>
<protein>
    <recommendedName>
        <fullName>HTH-type transcriptional regulator for conjugative element SXT</fullName>
    </recommendedName>
</protein>
<feature type="chain" id="PRO_0000149741" description="HTH-type transcriptional regulator for conjugative element SXT">
    <location>
        <begin position="1"/>
        <end position="215"/>
    </location>
</feature>
<feature type="domain" description="HTH cro/C1-type" evidence="1">
    <location>
        <begin position="8"/>
        <end position="61"/>
    </location>
</feature>
<feature type="DNA-binding region" description="H-T-H motif" evidence="1">
    <location>
        <begin position="19"/>
        <end position="38"/>
    </location>
</feature>
<gene>
    <name type="ORF">s087</name>
</gene>
<organism>
    <name type="scientific">Vibrio cholerae</name>
    <dbReference type="NCBI Taxonomy" id="666"/>
    <lineage>
        <taxon>Bacteria</taxon>
        <taxon>Pseudomonadati</taxon>
        <taxon>Pseudomonadota</taxon>
        <taxon>Gammaproteobacteria</taxon>
        <taxon>Vibrionales</taxon>
        <taxon>Vibrionaceae</taxon>
        <taxon>Vibrio</taxon>
    </lineage>
</organism>
<sequence length="215" mass="23491">MKTLSERLNHALQLTGVTQSELARRIGIKQQSISQICSGKSARSRYTMQIAEALRVNAHWLATGDGEIGLGVGNVEVGPDIKGRIPLINWVQAGDWTEIAEGFAHEDAEEWREVTGKAHEGCFALRVKGDSMENPSGKKSIPEGAVIVVDPELPYSSGSLVVARLDDSKEATFKQLVIDGEQKYLKPLNPQYPAIPINGNCTIIGVVRQAIIDFW</sequence>
<name>TRSX_VIBCL</name>
<reference key="1">
    <citation type="journal article" date="2002" name="J. Bacteriol.">
        <title>Genomic and functional analyses of SXT, an integrating antibiotic resistance gene transfer element derived from Vibrio cholerae.</title>
        <authorList>
            <person name="Beaber J.W."/>
            <person name="Hochhut B."/>
            <person name="Waldor M.K."/>
        </authorList>
    </citation>
    <scope>NUCLEOTIDE SEQUENCE [GENOMIC DNA]</scope>
</reference>
<evidence type="ECO:0000255" key="1">
    <source>
        <dbReference type="PROSITE-ProRule" id="PRU00257"/>
    </source>
</evidence>